<protein>
    <recommendedName>
        <fullName evidence="7">Meiotic drive suppressor wtf6</fullName>
    </recommendedName>
</protein>
<accession>A0A218N031</accession>
<dbReference type="EMBL" id="KY652739">
    <property type="protein sequence ID" value="ASF62179.1"/>
    <property type="molecule type" value="Genomic_DNA"/>
</dbReference>
<dbReference type="GO" id="GO:0005774">
    <property type="term" value="C:vacuolar membrane"/>
    <property type="evidence" value="ECO:0007669"/>
    <property type="project" value="UniProtKB-SubCell"/>
</dbReference>
<dbReference type="GO" id="GO:0110134">
    <property type="term" value="P:meiotic drive"/>
    <property type="evidence" value="ECO:0007669"/>
    <property type="project" value="InterPro"/>
</dbReference>
<dbReference type="InterPro" id="IPR004982">
    <property type="entry name" value="WTF"/>
</dbReference>
<dbReference type="Pfam" id="PF03303">
    <property type="entry name" value="WTF"/>
    <property type="match status" value="1"/>
</dbReference>
<keyword id="KW-0472">Membrane</keyword>
<keyword id="KW-0812">Transmembrane</keyword>
<keyword id="KW-1133">Transmembrane helix</keyword>
<keyword id="KW-0926">Vacuole</keyword>
<sequence>MKNNYTSLKSPIDEEDELKTDHEIDLEKGPLPEYDSEEESTLPPYSDHARLKNPPYTHREKNPSRSTDNSSPFLIKLLISFTSIILFNAPAVCYLKYKDAFFKNYGAAEWTLFGFWCLVCTLALISLTYFYETWTKAVKVTVISLAQCVKACGKGIKHFLKNWRNMIFAFCKSSLFCLVLLKAENELSSHLGDQQWGWKCSASAFTFMAVSSILIFIAETVEPGSCSTDLVKRVQAYCGYEARQYASSNTAIPLHEMNPENEA</sequence>
<feature type="chain" id="PRO_0000452256" description="Meiotic drive suppressor wtf6">
    <location>
        <begin position="1"/>
        <end position="263"/>
    </location>
</feature>
<feature type="transmembrane region" description="Helical" evidence="4">
    <location>
        <begin position="73"/>
        <end position="93"/>
    </location>
</feature>
<feature type="transmembrane region" description="Helical" evidence="4">
    <location>
        <begin position="110"/>
        <end position="130"/>
    </location>
</feature>
<feature type="transmembrane region" description="Helical" evidence="4">
    <location>
        <begin position="201"/>
        <end position="221"/>
    </location>
</feature>
<feature type="region of interest" description="Disordered" evidence="5">
    <location>
        <begin position="1"/>
        <end position="68"/>
    </location>
</feature>
<feature type="compositionally biased region" description="Basic and acidic residues" evidence="5">
    <location>
        <begin position="19"/>
        <end position="30"/>
    </location>
</feature>
<comment type="function">
    <text evidence="1 2 6">Acts as a suppressor component of the dual wtf meiotic drive system, and can suppress but not confer meiotic drive by compatible poisons (PubMed:28631612). Wtf meiotic drive systems promote unequal transmission of alleles from the parental zygote to progeny spores by encoding a poison and an antidote from the same locus; the poison is trans-acting and forms toxic aggregates in all spores within an ascus, wherease the antidote is spore-specific and targets aggregates for degradation by the vacuole (By similarity). Meiotic drive by wtf systems therefore lead to poisoning of all progeny that do not inherit the dual poison/antidote allele, or express a compatible antidote (By similarity).</text>
</comment>
<comment type="subunit">
    <text evidence="1 3">Homomer (By similarity). Interacts with other proteins that exhibit high sequence similarity (By similarity).</text>
</comment>
<comment type="subcellular location">
    <subcellularLocation>
        <location evidence="1 4">Spore membrane</location>
        <topology evidence="4">Multi-pass membrane protein</topology>
    </subcellularLocation>
    <subcellularLocation>
        <location evidence="1 4">Vacuole membrane</location>
        <topology evidence="4">Multi-pass membrane protein</topology>
    </subcellularLocation>
</comment>
<comment type="similarity">
    <text evidence="8">Belongs to the WTF family.</text>
</comment>
<gene>
    <name evidence="9" type="primary">wtf6</name>
</gene>
<name>WTF6_SCHKA</name>
<proteinExistence type="inferred from homology"/>
<reference evidence="9" key="1">
    <citation type="journal article" date="2017" name="Elife">
        <title>wtf genes are prolific dual poison-antidote meiotic drivers.</title>
        <authorList>
            <person name="Nuckolls N.L."/>
            <person name="Bravo Nunez M.A."/>
            <person name="Eickbush M.T."/>
            <person name="Young J.M."/>
            <person name="Lange J.J."/>
            <person name="Yu J.S."/>
            <person name="Smith G.R."/>
            <person name="Jaspersen S.L."/>
            <person name="Malik H.S."/>
            <person name="Zanders S.E."/>
        </authorList>
    </citation>
    <scope>NUCLEOTIDE SEQUENCE [GENOMIC DNA]</scope>
    <scope>FUNCTION</scope>
</reference>
<organism evidence="9">
    <name type="scientific">Schizosaccharomyces kambucha</name>
    <name type="common">Fission yeast</name>
    <dbReference type="NCBI Taxonomy" id="204045"/>
    <lineage>
        <taxon>Eukaryota</taxon>
        <taxon>Fungi</taxon>
        <taxon>Dikarya</taxon>
        <taxon>Ascomycota</taxon>
        <taxon>Taphrinomycotina</taxon>
        <taxon>Schizosaccharomycetes</taxon>
        <taxon>Schizosaccharomycetales</taxon>
        <taxon>Schizosaccharomycetaceae</taxon>
        <taxon>Schizosaccharomyces</taxon>
    </lineage>
</organism>
<evidence type="ECO:0000250" key="1">
    <source>
        <dbReference type="UniProtKB" id="A0A218N034"/>
    </source>
</evidence>
<evidence type="ECO:0000250" key="2">
    <source>
        <dbReference type="UniProtKB" id="A0A482ATU4"/>
    </source>
</evidence>
<evidence type="ECO:0000250" key="3">
    <source>
        <dbReference type="UniProtKB" id="O74420"/>
    </source>
</evidence>
<evidence type="ECO:0000255" key="4"/>
<evidence type="ECO:0000256" key="5">
    <source>
        <dbReference type="SAM" id="MobiDB-lite"/>
    </source>
</evidence>
<evidence type="ECO:0000269" key="6">
    <source>
    </source>
</evidence>
<evidence type="ECO:0000303" key="7">
    <source>
    </source>
</evidence>
<evidence type="ECO:0000305" key="8"/>
<evidence type="ECO:0000312" key="9">
    <source>
        <dbReference type="EMBL" id="ASF62179.1"/>
    </source>
</evidence>